<feature type="signal peptide" evidence="2">
    <location>
        <begin position="1"/>
        <end position="16"/>
    </location>
</feature>
<feature type="propeptide" id="PRO_0000233915" description="Activation peptide" evidence="2 6">
    <location>
        <begin position="17"/>
        <end position="106"/>
    </location>
</feature>
<feature type="chain" id="PRO_0000233916" description="Crustapain" evidence="6">
    <location>
        <begin position="107"/>
        <end position="323"/>
    </location>
</feature>
<feature type="active site" evidence="1">
    <location>
        <position position="130"/>
    </location>
</feature>
<feature type="active site" evidence="1">
    <location>
        <position position="269"/>
    </location>
</feature>
<feature type="active site" evidence="1">
    <location>
        <position position="290"/>
    </location>
</feature>
<feature type="disulfide bond" evidence="1">
    <location>
        <begin position="127"/>
        <end position="170"/>
    </location>
</feature>
<feature type="disulfide bond" evidence="1">
    <location>
        <begin position="161"/>
        <end position="203"/>
    </location>
</feature>
<feature type="disulfide bond" evidence="1">
    <location>
        <begin position="262"/>
        <end position="312"/>
    </location>
</feature>
<keyword id="KW-0177">Collagen degradation</keyword>
<keyword id="KW-0222">Digestion</keyword>
<keyword id="KW-0903">Direct protein sequencing</keyword>
<keyword id="KW-1015">Disulfide bond</keyword>
<keyword id="KW-0378">Hydrolase</keyword>
<keyword id="KW-0645">Protease</keyword>
<keyword id="KW-0964">Secreted</keyword>
<keyword id="KW-0732">Signal</keyword>
<keyword id="KW-0788">Thiol protease</keyword>
<keyword id="KW-0865">Zymogen</keyword>
<name>CRUST_PANBO</name>
<dbReference type="EC" id="3.4.22.-"/>
<dbReference type="EMBL" id="AB091669">
    <property type="protein sequence ID" value="BAC65417.1"/>
    <property type="molecule type" value="mRNA"/>
</dbReference>
<dbReference type="SMR" id="Q86GF7"/>
<dbReference type="MEROPS" id="C01.030"/>
<dbReference type="GO" id="GO:0005576">
    <property type="term" value="C:extracellular region"/>
    <property type="evidence" value="ECO:0000305"/>
    <property type="project" value="UniProtKB"/>
</dbReference>
<dbReference type="GO" id="GO:0008234">
    <property type="term" value="F:cysteine-type peptidase activity"/>
    <property type="evidence" value="ECO:0000314"/>
    <property type="project" value="UniProtKB"/>
</dbReference>
<dbReference type="GO" id="GO:0030574">
    <property type="term" value="P:collagen catabolic process"/>
    <property type="evidence" value="ECO:0000314"/>
    <property type="project" value="UniProtKB"/>
</dbReference>
<dbReference type="GO" id="GO:0007586">
    <property type="term" value="P:digestion"/>
    <property type="evidence" value="ECO:0000303"/>
    <property type="project" value="UniProtKB"/>
</dbReference>
<dbReference type="GO" id="GO:0030163">
    <property type="term" value="P:protein catabolic process"/>
    <property type="evidence" value="ECO:0000303"/>
    <property type="project" value="UniProtKB"/>
</dbReference>
<dbReference type="GO" id="GO:0006508">
    <property type="term" value="P:proteolysis"/>
    <property type="evidence" value="ECO:0007669"/>
    <property type="project" value="UniProtKB-KW"/>
</dbReference>
<dbReference type="CDD" id="cd02248">
    <property type="entry name" value="Peptidase_C1A"/>
    <property type="match status" value="1"/>
</dbReference>
<dbReference type="FunFam" id="3.90.70.10:FF:000006">
    <property type="entry name" value="Cathepsin S"/>
    <property type="match status" value="1"/>
</dbReference>
<dbReference type="Gene3D" id="3.90.70.10">
    <property type="entry name" value="Cysteine proteinases"/>
    <property type="match status" value="1"/>
</dbReference>
<dbReference type="InterPro" id="IPR038765">
    <property type="entry name" value="Papain-like_cys_pep_sf"/>
</dbReference>
<dbReference type="InterPro" id="IPR025661">
    <property type="entry name" value="Pept_asp_AS"/>
</dbReference>
<dbReference type="InterPro" id="IPR000169">
    <property type="entry name" value="Pept_cys_AS"/>
</dbReference>
<dbReference type="InterPro" id="IPR025660">
    <property type="entry name" value="Pept_his_AS"/>
</dbReference>
<dbReference type="InterPro" id="IPR013128">
    <property type="entry name" value="Peptidase_C1A"/>
</dbReference>
<dbReference type="InterPro" id="IPR000668">
    <property type="entry name" value="Peptidase_C1A_C"/>
</dbReference>
<dbReference type="InterPro" id="IPR039417">
    <property type="entry name" value="Peptidase_C1A_papain-like"/>
</dbReference>
<dbReference type="InterPro" id="IPR013201">
    <property type="entry name" value="Prot_inhib_I29"/>
</dbReference>
<dbReference type="PANTHER" id="PTHR12411">
    <property type="entry name" value="CYSTEINE PROTEASE FAMILY C1-RELATED"/>
    <property type="match status" value="1"/>
</dbReference>
<dbReference type="Pfam" id="PF08246">
    <property type="entry name" value="Inhibitor_I29"/>
    <property type="match status" value="1"/>
</dbReference>
<dbReference type="Pfam" id="PF00112">
    <property type="entry name" value="Peptidase_C1"/>
    <property type="match status" value="1"/>
</dbReference>
<dbReference type="PRINTS" id="PR00705">
    <property type="entry name" value="PAPAIN"/>
</dbReference>
<dbReference type="SMART" id="SM00848">
    <property type="entry name" value="Inhibitor_I29"/>
    <property type="match status" value="1"/>
</dbReference>
<dbReference type="SMART" id="SM00645">
    <property type="entry name" value="Pept_C1"/>
    <property type="match status" value="1"/>
</dbReference>
<dbReference type="SUPFAM" id="SSF54001">
    <property type="entry name" value="Cysteine proteinases"/>
    <property type="match status" value="1"/>
</dbReference>
<dbReference type="PROSITE" id="PS00640">
    <property type="entry name" value="THIOL_PROTEASE_ASN"/>
    <property type="match status" value="1"/>
</dbReference>
<dbReference type="PROSITE" id="PS00139">
    <property type="entry name" value="THIOL_PROTEASE_CYS"/>
    <property type="match status" value="1"/>
</dbReference>
<dbReference type="PROSITE" id="PS00639">
    <property type="entry name" value="THIOL_PROTEASE_HIS"/>
    <property type="match status" value="1"/>
</dbReference>
<comment type="function">
    <text evidence="6">Cysteine protease which may be involved in digestion. Shows highest affinity for proline at the P2 position. Cleaves valine more efficiently than leucine and exhibits 10-fold lower affinity for phenylalanine than proline. Can cleave type I collagen.</text>
</comment>
<comment type="biophysicochemical properties">
    <kinetics>
        <KM evidence="6">118 uM for Z-Phe-Arg-MCA (at pH 4.0)</KM>
        <KM evidence="6">78 uM for Z-Phe-Arg-MCA (at pH 6.0)</KM>
        <KM evidence="6">86 uM for Z-Phe-Arg-MCA (at pH 8.0)</KM>
        <KM evidence="6">98 uM for Z Pro-Arg-MCA (at pH 4.0)</KM>
        <KM evidence="6">65 uM for Z-Pro-Arg-MCA (at pH 6.0)</KM>
        <KM evidence="6">70 uM for Z-Pro-Arg-MCA (at pH 8.0)</KM>
    </kinetics>
    <phDependence>
        <text evidence="6">Optimum pH is 6.0. Unstable at pH values less than 5.0 and remains fully active over a wide alkaline pH range.</text>
    </phDependence>
    <temperatureDependence>
        <text evidence="6">Optimum temperature is 40 degrees Celsius but displays considerable activity as low as 20 degrees Celsius. Thermostable. Retains 60% of initial activity after incubation at 50 degrees Celsius for 2 hours.</text>
    </temperatureDependence>
</comment>
<comment type="subcellular location">
    <subcellularLocation>
        <location>Secreted</location>
    </subcellularLocation>
</comment>
<comment type="similarity">
    <text evidence="3 4 5">Belongs to the peptidase C1 family.</text>
</comment>
<proteinExistence type="evidence at protein level"/>
<organism>
    <name type="scientific">Pandalus borealis</name>
    <name type="common">Northern red shrimp</name>
    <dbReference type="NCBI Taxonomy" id="6703"/>
    <lineage>
        <taxon>Eukaryota</taxon>
        <taxon>Metazoa</taxon>
        <taxon>Ecdysozoa</taxon>
        <taxon>Arthropoda</taxon>
        <taxon>Crustacea</taxon>
        <taxon>Multicrustacea</taxon>
        <taxon>Malacostraca</taxon>
        <taxon>Eumalacostraca</taxon>
        <taxon>Eucarida</taxon>
        <taxon>Decapoda</taxon>
        <taxon>Pleocyemata</taxon>
        <taxon>Caridea</taxon>
        <taxon>Pandaloidea</taxon>
        <taxon>Pandalidae</taxon>
        <taxon>Pandalus</taxon>
    </lineage>
</organism>
<sequence length="323" mass="35525">MRSLFLILLGLAAVSAIGEWENFKTKFGKKYANSEEESHRMSVFMDKLKFIQEHNERYDKGEVTYWLKINNFSDLTHEEVLATKTGMTRRRHPLSVLPKSAPTTPMAADVDWRNKGAVTPVKDQGQCGSCWAFSAVAALEGAHFLKTGDLVSLSEQNLVDCSSSYGNQGCNGGWPYQAYQYIIANRGIDTESSYPYKAIDDNCRYDAGNIGATVSSYVEPASGDESALQHAVQNEGPVSVCIDAGQSSFGSYGGGVYYEPNCDSWYANHAVTAVGYGTDANGGDYWIVKNSWGAWWGESGYIKMARNRDNNCAIATYSVYPVV</sequence>
<accession>Q86GF7</accession>
<protein>
    <recommendedName>
        <fullName>Crustapain</fullName>
        <ecNumber>3.4.22.-</ecNumber>
    </recommendedName>
    <alternativeName>
        <fullName>NsCys</fullName>
    </alternativeName>
</protein>
<evidence type="ECO:0000250" key="1">
    <source>
        <dbReference type="UniProtKB" id="P07711"/>
    </source>
</evidence>
<evidence type="ECO:0000255" key="2"/>
<evidence type="ECO:0000255" key="3">
    <source>
        <dbReference type="PROSITE-ProRule" id="PRU10088"/>
    </source>
</evidence>
<evidence type="ECO:0000255" key="4">
    <source>
        <dbReference type="PROSITE-ProRule" id="PRU10089"/>
    </source>
</evidence>
<evidence type="ECO:0000255" key="5">
    <source>
        <dbReference type="PROSITE-ProRule" id="PRU10090"/>
    </source>
</evidence>
<evidence type="ECO:0000269" key="6">
    <source>
    </source>
</evidence>
<evidence type="ECO:0000305" key="7"/>
<evidence type="ECO:0000312" key="8">
    <source>
        <dbReference type="EMBL" id="BAC65417.1"/>
    </source>
</evidence>
<reference evidence="7 8" key="1">
    <citation type="journal article" date="2003" name="J. Biochem.">
        <title>Molecular cloning and functional characterization of crustapain: a distinct cysteine proteinase with unique substrate specificity from northern shrimp Pandalus borealis.</title>
        <authorList>
            <person name="Aoki H."/>
            <person name="Ahsan M.N."/>
            <person name="Watabe S."/>
        </authorList>
    </citation>
    <scope>NUCLEOTIDE SEQUENCE [MRNA]</scope>
    <scope>PROTEIN SEQUENCE OF N-TERMINUS</scope>
    <scope>FUNCTION</scope>
    <scope>BIOPHYSICOCHEMICAL PROPERTIES</scope>
    <source>
        <tissue evidence="8">Hepatopancreas</tissue>
    </source>
</reference>
<gene>
    <name evidence="8" type="primary">Cys</name>
</gene>